<organism>
    <name type="scientific">Themiste dyscrita</name>
    <name type="common">Peanut worm</name>
    <name type="synonym">Dendrostomum dyscritum</name>
    <dbReference type="NCBI Taxonomy" id="6436"/>
    <lineage>
        <taxon>Eukaryota</taxon>
        <taxon>Metazoa</taxon>
        <taxon>Spiralia</taxon>
        <taxon>Lophotrochozoa</taxon>
        <taxon>Annelida</taxon>
        <taxon>Sipuncula</taxon>
        <taxon>Sipunculidea</taxon>
        <taxon>Golfingiida</taxon>
        <taxon>Themistidae</taxon>
        <taxon>Themiste</taxon>
    </lineage>
</organism>
<name>HEMT_THEDY</name>
<reference key="1">
    <citation type="journal article" date="1978" name="J. Biol. Chem.">
        <title>Amino acid sequence of hemerythrin from Themiste dyscritum.</title>
        <authorList>
            <person name="Loehr J.S."/>
            <person name="Lammers P.J."/>
            <person name="Brimhall B."/>
            <person name="Hermodson M.A."/>
        </authorList>
    </citation>
    <scope>PROTEIN SEQUENCE</scope>
</reference>
<reference key="2">
    <citation type="journal article" date="1978" name="Biochemistry">
        <title>Structure of methemerythrin at 2.8-A resolution: computer graphics fit of an averaged electron density map.</title>
        <authorList>
            <person name="Stenkamp R.E."/>
            <person name="Sieker L.C."/>
            <person name="Jensen L.H."/>
            <person name="McQueen J.E. Jr."/>
        </authorList>
    </citation>
    <scope>X-RAY CRYSTALLOGRAPHY (2.8 ANGSTROMS)</scope>
    <scope>IRON LIGANDS</scope>
</reference>
<reference key="3">
    <citation type="journal article" date="1981" name="Nature">
        <title>Structure of the binuclear iron complex in metazidohaemerythrin from Themiste dyscritum at 2.2-A resolution.</title>
        <authorList>
            <person name="Stenkamp R.E."/>
            <person name="Sieker L.C."/>
            <person name="Jensen L.H."/>
            <person name="Sanders-Loehr J."/>
        </authorList>
    </citation>
    <scope>X-RAY CRYSTALLOGRAPHY (2.2 ANGSTROMS)</scope>
    <scope>IRON LIGANDS</scope>
</reference>
<reference key="4">
    <citation type="journal article" date="1991" name="J. Mol. Biol.">
        <title>Structures of met and azidomet hemerythrin at 1.66-A resolution.</title>
        <authorList>
            <person name="Holmes M.A."/>
            <person name="Stenkamp R.E."/>
        </authorList>
    </citation>
    <scope>X-RAY CRYSTALLOGRAPHY (1.66 ANGSTROMS) IN COMPLEX WITH IRON</scope>
</reference>
<accession>P02246</accession>
<comment type="function">
    <text>Hemerythrin is a respiratory protein in blood cells of certain marine worms. The oxygen-binding site in each chain contains two iron atoms.</text>
</comment>
<comment type="subunit">
    <text evidence="1">Homooctamer.</text>
</comment>
<comment type="similarity">
    <text evidence="4">Belongs to the hemerythrin family.</text>
</comment>
<dbReference type="PIR" id="A92234">
    <property type="entry name" value="HRTHBD"/>
</dbReference>
<dbReference type="PDB" id="1HMD">
    <property type="method" value="X-ray"/>
    <property type="resolution" value="2.00 A"/>
    <property type="chains" value="A/B/C/D=1-113"/>
</dbReference>
<dbReference type="PDB" id="1HMO">
    <property type="method" value="X-ray"/>
    <property type="resolution" value="2.00 A"/>
    <property type="chains" value="A/B/C/D=1-113"/>
</dbReference>
<dbReference type="PDB" id="2HMQ">
    <property type="method" value="X-ray"/>
    <property type="resolution" value="1.66 A"/>
    <property type="chains" value="A/B/C/D=1-113"/>
</dbReference>
<dbReference type="PDB" id="2HMZ">
    <property type="method" value="X-ray"/>
    <property type="resolution" value="1.66 A"/>
    <property type="chains" value="A/B/C/D=1-113"/>
</dbReference>
<dbReference type="PDBsum" id="1HMD"/>
<dbReference type="PDBsum" id="1HMO"/>
<dbReference type="PDBsum" id="2HMQ"/>
<dbReference type="PDBsum" id="2HMZ"/>
<dbReference type="SMR" id="P02246"/>
<dbReference type="EvolutionaryTrace" id="P02246"/>
<dbReference type="GO" id="GO:0005506">
    <property type="term" value="F:iron ion binding"/>
    <property type="evidence" value="ECO:0007669"/>
    <property type="project" value="InterPro"/>
</dbReference>
<dbReference type="GO" id="GO:0005344">
    <property type="term" value="F:oxygen carrier activity"/>
    <property type="evidence" value="ECO:0007669"/>
    <property type="project" value="UniProtKB-KW"/>
</dbReference>
<dbReference type="Gene3D" id="1.20.120.50">
    <property type="entry name" value="Hemerythrin-like"/>
    <property type="match status" value="1"/>
</dbReference>
<dbReference type="InterPro" id="IPR002063">
    <property type="entry name" value="Haemerythrin"/>
</dbReference>
<dbReference type="InterPro" id="IPR016131">
    <property type="entry name" value="Haemerythrin_Fe_BS"/>
</dbReference>
<dbReference type="InterPro" id="IPR050669">
    <property type="entry name" value="Hemerythrin"/>
</dbReference>
<dbReference type="InterPro" id="IPR012312">
    <property type="entry name" value="Hemerythrin-like"/>
</dbReference>
<dbReference type="InterPro" id="IPR035938">
    <property type="entry name" value="Hemerythrin-like_sf"/>
</dbReference>
<dbReference type="InterPro" id="IPR012827">
    <property type="entry name" value="Hemerythrin_metal-bd"/>
</dbReference>
<dbReference type="NCBIfam" id="TIGR02481">
    <property type="entry name" value="hemeryth_dom"/>
    <property type="match status" value="1"/>
</dbReference>
<dbReference type="NCBIfam" id="TIGR00058">
    <property type="entry name" value="Hemerythrin"/>
    <property type="match status" value="1"/>
</dbReference>
<dbReference type="PANTHER" id="PTHR37164">
    <property type="entry name" value="BACTERIOHEMERYTHRIN"/>
    <property type="match status" value="1"/>
</dbReference>
<dbReference type="PANTHER" id="PTHR37164:SF1">
    <property type="entry name" value="BACTERIOHEMERYTHRIN"/>
    <property type="match status" value="1"/>
</dbReference>
<dbReference type="Pfam" id="PF01814">
    <property type="entry name" value="Hemerythrin"/>
    <property type="match status" value="1"/>
</dbReference>
<dbReference type="PIRSF" id="PIRSF002033">
    <property type="entry name" value="Hemerythrin"/>
    <property type="match status" value="1"/>
</dbReference>
<dbReference type="PRINTS" id="PR00186">
    <property type="entry name" value="HEMERYTHRIN"/>
</dbReference>
<dbReference type="SUPFAM" id="SSF47188">
    <property type="entry name" value="Hemerythrin-like"/>
    <property type="match status" value="1"/>
</dbReference>
<dbReference type="PROSITE" id="PS00550">
    <property type="entry name" value="HEMERYTHRINS"/>
    <property type="match status" value="1"/>
</dbReference>
<keyword id="KW-0002">3D-structure</keyword>
<keyword id="KW-0903">Direct protein sequencing</keyword>
<keyword id="KW-0408">Iron</keyword>
<keyword id="KW-0479">Metal-binding</keyword>
<keyword id="KW-0561">Oxygen transport</keyword>
<keyword id="KW-0813">Transport</keyword>
<evidence type="ECO:0000250" key="1">
    <source>
        <dbReference type="UniProtKB" id="P02244"/>
    </source>
</evidence>
<evidence type="ECO:0000269" key="2">
    <source>
    </source>
</evidence>
<evidence type="ECO:0000269" key="3">
    <source>
    </source>
</evidence>
<evidence type="ECO:0000305" key="4"/>
<evidence type="ECO:0007744" key="5">
    <source>
        <dbReference type="PDB" id="1HMD"/>
    </source>
</evidence>
<evidence type="ECO:0007744" key="6">
    <source>
        <dbReference type="PDB" id="1HMO"/>
    </source>
</evidence>
<evidence type="ECO:0007744" key="7">
    <source>
        <dbReference type="PDB" id="2HMQ"/>
    </source>
</evidence>
<evidence type="ECO:0007829" key="8">
    <source>
        <dbReference type="PDB" id="1HMD"/>
    </source>
</evidence>
<proteinExistence type="evidence at protein level"/>
<sequence length="113" mass="13319">GFPIPDPYCWDISFRTFYTIVDDEHKTLFNGILLLSQADNADHLNELRRCTGKHFLNEQQLMQASQYAGYAEHKKAHDDFIHKLDTWDGDVTYAKNWLVNHIKTIDFKYRGKI</sequence>
<protein>
    <recommendedName>
        <fullName>Hemerythrin</fullName>
    </recommendedName>
</protein>
<feature type="chain" id="PRO_0000191839" description="Hemerythrin">
    <location>
        <begin position="1"/>
        <end position="113"/>
    </location>
</feature>
<feature type="binding site" evidence="2 3 5 6 7">
    <location>
        <position position="25"/>
    </location>
    <ligand>
        <name>Fe cation</name>
        <dbReference type="ChEBI" id="CHEBI:24875"/>
        <label>1</label>
    </ligand>
</feature>
<feature type="binding site" evidence="2 3 5 6 7">
    <location>
        <position position="54"/>
    </location>
    <ligand>
        <name>Fe cation</name>
        <dbReference type="ChEBI" id="CHEBI:24875"/>
        <label>1</label>
    </ligand>
</feature>
<feature type="binding site" evidence="2 5 6 7">
    <location>
        <position position="58"/>
    </location>
    <ligand>
        <name>Fe cation</name>
        <dbReference type="ChEBI" id="CHEBI:24875"/>
        <label>1</label>
    </ligand>
</feature>
<feature type="binding site" evidence="2 5 6 7">
    <location>
        <position position="58"/>
    </location>
    <ligand>
        <name>Fe cation</name>
        <dbReference type="ChEBI" id="CHEBI:24875"/>
        <label>2</label>
    </ligand>
</feature>
<feature type="binding site" evidence="2 3 5 6 7">
    <location>
        <position position="73"/>
    </location>
    <ligand>
        <name>Fe cation</name>
        <dbReference type="ChEBI" id="CHEBI:24875"/>
        <label>2</label>
    </ligand>
</feature>
<feature type="binding site" evidence="2 3 5 6 7">
    <location>
        <position position="77"/>
    </location>
    <ligand>
        <name>Fe cation</name>
        <dbReference type="ChEBI" id="CHEBI:24875"/>
        <label>2</label>
    </ligand>
</feature>
<feature type="binding site" evidence="2 3 5 6 7">
    <location>
        <position position="101"/>
    </location>
    <ligand>
        <name>Fe cation</name>
        <dbReference type="ChEBI" id="CHEBI:24875"/>
        <label>2</label>
    </ligand>
</feature>
<feature type="binding site" evidence="2 5 6 7">
    <location>
        <position position="106"/>
    </location>
    <ligand>
        <name>Fe cation</name>
        <dbReference type="ChEBI" id="CHEBI:24875"/>
        <label>1</label>
    </ligand>
</feature>
<feature type="binding site" evidence="2 5 6 7">
    <location>
        <position position="106"/>
    </location>
    <ligand>
        <name>Fe cation</name>
        <dbReference type="ChEBI" id="CHEBI:24875"/>
        <label>2</label>
    </ligand>
</feature>
<feature type="sequence variant">
    <original>A</original>
    <variation>S</variation>
    <location>
        <position position="64"/>
    </location>
</feature>
<feature type="helix" evidence="8">
    <location>
        <begin position="12"/>
        <end position="14"/>
    </location>
</feature>
<feature type="helix" evidence="8">
    <location>
        <begin position="19"/>
        <end position="37"/>
    </location>
</feature>
<feature type="helix" evidence="8">
    <location>
        <begin position="41"/>
        <end position="64"/>
    </location>
</feature>
<feature type="helix" evidence="8">
    <location>
        <begin position="70"/>
        <end position="85"/>
    </location>
</feature>
<feature type="helix" evidence="8">
    <location>
        <begin position="91"/>
        <end position="104"/>
    </location>
</feature>
<feature type="helix" evidence="8">
    <location>
        <begin position="107"/>
        <end position="109"/>
    </location>
</feature>
<feature type="turn" evidence="8">
    <location>
        <begin position="110"/>
        <end position="112"/>
    </location>
</feature>